<dbReference type="EMBL" id="AM933172">
    <property type="protein sequence ID" value="CAR32193.1"/>
    <property type="molecule type" value="Genomic_DNA"/>
</dbReference>
<dbReference type="RefSeq" id="WP_000850547.1">
    <property type="nucleotide sequence ID" value="NC_011294.1"/>
</dbReference>
<dbReference type="SMR" id="B5QVN7"/>
<dbReference type="GeneID" id="83645644"/>
<dbReference type="KEGG" id="set:SEN0605"/>
<dbReference type="HOGENOM" id="CLU_161438_2_1_6"/>
<dbReference type="Proteomes" id="UP000000613">
    <property type="component" value="Chromosome"/>
</dbReference>
<dbReference type="GO" id="GO:0005829">
    <property type="term" value="C:cytosol"/>
    <property type="evidence" value="ECO:0007669"/>
    <property type="project" value="TreeGrafter"/>
</dbReference>
<dbReference type="FunFam" id="3.30.70.260:FF:000002">
    <property type="entry name" value="UPF0250 protein YbeD"/>
    <property type="match status" value="1"/>
</dbReference>
<dbReference type="Gene3D" id="3.30.70.260">
    <property type="match status" value="1"/>
</dbReference>
<dbReference type="HAMAP" id="MF_00659">
    <property type="entry name" value="UPF0250"/>
    <property type="match status" value="1"/>
</dbReference>
<dbReference type="InterPro" id="IPR007454">
    <property type="entry name" value="UPF0250_YbeD-like"/>
</dbReference>
<dbReference type="InterPro" id="IPR027471">
    <property type="entry name" value="YbeD-like_sf"/>
</dbReference>
<dbReference type="NCBIfam" id="NF003447">
    <property type="entry name" value="PRK04998.1"/>
    <property type="match status" value="1"/>
</dbReference>
<dbReference type="PANTHER" id="PTHR38036">
    <property type="entry name" value="UPF0250 PROTEIN YBED"/>
    <property type="match status" value="1"/>
</dbReference>
<dbReference type="PANTHER" id="PTHR38036:SF1">
    <property type="entry name" value="UPF0250 PROTEIN YBED"/>
    <property type="match status" value="1"/>
</dbReference>
<dbReference type="Pfam" id="PF04359">
    <property type="entry name" value="DUF493"/>
    <property type="match status" value="1"/>
</dbReference>
<dbReference type="SUPFAM" id="SSF117991">
    <property type="entry name" value="YbeD/HP0495-like"/>
    <property type="match status" value="1"/>
</dbReference>
<evidence type="ECO:0000255" key="1">
    <source>
        <dbReference type="HAMAP-Rule" id="MF_00659"/>
    </source>
</evidence>
<accession>B5QVN7</accession>
<gene>
    <name evidence="1" type="primary">ybeD</name>
    <name type="ordered locus">SEN0605</name>
</gene>
<sequence length="87" mass="9799">MKTKLNELLEFPTPFTYKVMGQALPELVDQVVEVVQRHAPGDYSPTVKPSSKGNYHSVSITINATHIEQVETLYEELGNIDIVRMVL</sequence>
<reference key="1">
    <citation type="journal article" date="2008" name="Genome Res.">
        <title>Comparative genome analysis of Salmonella enteritidis PT4 and Salmonella gallinarum 287/91 provides insights into evolutionary and host adaptation pathways.</title>
        <authorList>
            <person name="Thomson N.R."/>
            <person name="Clayton D.J."/>
            <person name="Windhorst D."/>
            <person name="Vernikos G."/>
            <person name="Davidson S."/>
            <person name="Churcher C."/>
            <person name="Quail M.A."/>
            <person name="Stevens M."/>
            <person name="Jones M.A."/>
            <person name="Watson M."/>
            <person name="Barron A."/>
            <person name="Layton A."/>
            <person name="Pickard D."/>
            <person name="Kingsley R.A."/>
            <person name="Bignell A."/>
            <person name="Clark L."/>
            <person name="Harris B."/>
            <person name="Ormond D."/>
            <person name="Abdellah Z."/>
            <person name="Brooks K."/>
            <person name="Cherevach I."/>
            <person name="Chillingworth T."/>
            <person name="Woodward J."/>
            <person name="Norberczak H."/>
            <person name="Lord A."/>
            <person name="Arrowsmith C."/>
            <person name="Jagels K."/>
            <person name="Moule S."/>
            <person name="Mungall K."/>
            <person name="Saunders M."/>
            <person name="Whitehead S."/>
            <person name="Chabalgoity J.A."/>
            <person name="Maskell D."/>
            <person name="Humphreys T."/>
            <person name="Roberts M."/>
            <person name="Barrow P.A."/>
            <person name="Dougan G."/>
            <person name="Parkhill J."/>
        </authorList>
    </citation>
    <scope>NUCLEOTIDE SEQUENCE [LARGE SCALE GENOMIC DNA]</scope>
    <source>
        <strain>P125109</strain>
    </source>
</reference>
<name>YBED_SALEP</name>
<comment type="similarity">
    <text evidence="1">Belongs to the UPF0250 family.</text>
</comment>
<organism>
    <name type="scientific">Salmonella enteritidis PT4 (strain P125109)</name>
    <dbReference type="NCBI Taxonomy" id="550537"/>
    <lineage>
        <taxon>Bacteria</taxon>
        <taxon>Pseudomonadati</taxon>
        <taxon>Pseudomonadota</taxon>
        <taxon>Gammaproteobacteria</taxon>
        <taxon>Enterobacterales</taxon>
        <taxon>Enterobacteriaceae</taxon>
        <taxon>Salmonella</taxon>
    </lineage>
</organism>
<proteinExistence type="inferred from homology"/>
<feature type="chain" id="PRO_1000131255" description="UPF0250 protein YbeD">
    <location>
        <begin position="1"/>
        <end position="87"/>
    </location>
</feature>
<protein>
    <recommendedName>
        <fullName evidence="1">UPF0250 protein YbeD</fullName>
    </recommendedName>
</protein>